<proteinExistence type="evidence at protein level"/>
<keyword id="KW-0903">Direct protein sequencing</keyword>
<keyword id="KW-1015">Disulfide bond</keyword>
<keyword id="KW-0928">Hypersensitive response elicitation</keyword>
<keyword id="KW-0964">Secreted</keyword>
<organism>
    <name type="scientific">Phytophthora megasperma</name>
    <name type="common">Potato pink rot fungus</name>
    <dbReference type="NCBI Taxonomy" id="4788"/>
    <lineage>
        <taxon>Eukaryota</taxon>
        <taxon>Sar</taxon>
        <taxon>Stramenopiles</taxon>
        <taxon>Oomycota</taxon>
        <taxon>Peronosporales</taxon>
        <taxon>Peronosporaceae</taxon>
        <taxon>Phytophthora</taxon>
    </lineage>
</organism>
<evidence type="ECO:0000250" key="1"/>
<evidence type="ECO:0000305" key="2"/>
<reference key="1">
    <citation type="journal article" date="1993" name="Phytochemistry">
        <title>Sequences of acidic and basic elicitin isoforms secreted by Phytophthora megasperma megasperma.</title>
        <authorList>
            <person name="Huet J.-C."/>
            <person name="Pernollet J.-C."/>
        </authorList>
    </citation>
    <scope>PROTEIN SEQUENCE</scope>
</reference>
<name>ELIA_PHYME</name>
<comment type="function">
    <text>Induces local and distal defense responses (incompatible hypersensitive reaction) in plants from the solanaceae and cruciferae families. Elicits leaf necrosis and causes the accumulation of pathogenesis-related proteins. Might interact with the lipidic molecules of the plasma membrane.</text>
</comment>
<comment type="subcellular location">
    <subcellularLocation>
        <location>Secreted</location>
    </subcellularLocation>
</comment>
<comment type="similarity">
    <text evidence="2">Belongs to the elicitin family.</text>
</comment>
<dbReference type="SMR" id="P35698"/>
<dbReference type="GO" id="GO:0005576">
    <property type="term" value="C:extracellular region"/>
    <property type="evidence" value="ECO:0007669"/>
    <property type="project" value="UniProtKB-SubCell"/>
</dbReference>
<dbReference type="GO" id="GO:0052040">
    <property type="term" value="P:symbiont-mediated perturbation of host programmed cell death"/>
    <property type="evidence" value="ECO:0007669"/>
    <property type="project" value="UniProtKB-KW"/>
</dbReference>
<dbReference type="Gene3D" id="1.10.239.10">
    <property type="entry name" value="Elicitin domain"/>
    <property type="match status" value="1"/>
</dbReference>
<dbReference type="InterPro" id="IPR002200">
    <property type="entry name" value="Elicitin"/>
</dbReference>
<dbReference type="InterPro" id="IPR036470">
    <property type="entry name" value="Elicitin_sf"/>
</dbReference>
<dbReference type="Pfam" id="PF00964">
    <property type="entry name" value="Elicitin"/>
    <property type="match status" value="1"/>
</dbReference>
<dbReference type="PRINTS" id="PR00948">
    <property type="entry name" value="ELICITIN"/>
</dbReference>
<dbReference type="SMART" id="SM01187">
    <property type="entry name" value="Elicitin"/>
    <property type="match status" value="1"/>
</dbReference>
<dbReference type="SUPFAM" id="SSF48647">
    <property type="entry name" value="Fungal elicitin"/>
    <property type="match status" value="1"/>
</dbReference>
<feature type="chain" id="PRO_0000185440" description="Alpha-elicitin MGM-alpha">
    <location>
        <begin position="1"/>
        <end position="98"/>
    </location>
</feature>
<feature type="disulfide bond" evidence="1">
    <location>
        <begin position="3"/>
        <end position="71"/>
    </location>
</feature>
<feature type="disulfide bond" evidence="1">
    <location>
        <begin position="27"/>
        <end position="56"/>
    </location>
</feature>
<feature type="disulfide bond" evidence="1">
    <location>
        <begin position="51"/>
        <end position="95"/>
    </location>
</feature>
<accession>P35698</accession>
<sequence>TTCTSTQQTAAYVTLVSILSDSSFNQCATDSGYSMLTATALPTTAQYKLMCASTACNTMINKIVTLNPPDCELTVPTSGLVLNVYSYANGFSATCASL</sequence>
<protein>
    <recommendedName>
        <fullName>Alpha-elicitin MGM-alpha</fullName>
    </recommendedName>
</protein>